<name>AOX1A_ARATH</name>
<comment type="function">
    <text evidence="9 12 24">Catalyzes the cyanide-resistant oxidation of ubiquinol and the reduction of molecular oxygen to water, but does not translocate protons and consequently is not linked to oxidative phosphorylation. Increases respiration when the cytochrome respiratory pathway is restricted, or in response to low temperatures.</text>
</comment>
<comment type="catalytic activity">
    <reaction evidence="24">
        <text>2 a ubiquinol + O2 = 2 a ubiquinone + 2 H2O</text>
        <dbReference type="Rhea" id="RHEA:30255"/>
        <dbReference type="Rhea" id="RHEA-COMP:9565"/>
        <dbReference type="Rhea" id="RHEA-COMP:9566"/>
        <dbReference type="ChEBI" id="CHEBI:15377"/>
        <dbReference type="ChEBI" id="CHEBI:15379"/>
        <dbReference type="ChEBI" id="CHEBI:16389"/>
        <dbReference type="ChEBI" id="CHEBI:17976"/>
        <dbReference type="EC" id="1.10.3.11"/>
    </reaction>
</comment>
<comment type="cofactor">
    <cofactor evidence="4 6 22">
        <name>Fe cation</name>
        <dbReference type="ChEBI" id="CHEBI:24875"/>
    </cofactor>
    <text evidence="4 6 22">Binds 2 iron ions per subunit.</text>
</comment>
<comment type="activity regulation">
    <text evidence="5 25">When the two monomeric subunits are covalently linked by a S-S bond, the enzyme is essentially inactive. When the disulfide bond is reduced, its component sulfhydryls can associate with K-keto acids through formation of a thiohemiacetal, resulting in enzyme activation. Activated by glyoxylate, irrespective to the substitution found at Cys-127. That suggests the presence of a second activation site, possibly Cys-177.</text>
</comment>
<comment type="subunit">
    <text evidence="25">Homodimer; disulfide-linked.</text>
</comment>
<comment type="subcellular location">
    <subcellularLocation>
        <location evidence="28">Mitochondrion inner membrane</location>
        <topology evidence="28">Multi-pass membrane protein</topology>
    </subcellularLocation>
    <text>Mitochondrial, possibly in the inner surface of the inner mitochondrial membrane.</text>
</comment>
<comment type="tissue specificity">
    <text evidence="11 13 23">Expressed in roots, stems, cotyledons, leaves and flowers. High expression in sepals.</text>
</comment>
<comment type="developmental stage">
    <text evidence="7 13">Expressed throughout development. Low expression during 48 hours after imbibition and then increases.</text>
</comment>
<comment type="induction">
    <text evidence="7 8 10 11 14 15 17 18 20 23">Up-regulated by antimycin A, low-nitrogen and salt stresses, high light, H(2)O(2), ethylene, paraquat, rotenone, salicylic acid, malonate,erythromycin and cold treatments.</text>
</comment>
<comment type="disruption phenotype">
    <text evidence="16 17 19 21">No visible phenotype under normal growth conditions. Decreased operating efficiency of photosystem II and an enhanced activity of cyclic electron transport around photosystem I. Altered photosynthetic carbon metabolism when grown under high CO(2) concentrations.</text>
</comment>
<comment type="miscellaneous">
    <text evidence="27 29">Cys-127 is involved in the sulfhydryl/disulfide regulation system, but is not required for subunit dimerization. Presence of a positive charge at this residue 127 confers activity while an uncharged substitution creates an inactive enzyme (PubMed:12034477, PubMed:9804851).</text>
</comment>
<comment type="similarity">
    <text evidence="26">Belongs to the alternative oxidase family.</text>
</comment>
<comment type="sequence caution" evidence="26">
    <conflict type="frameshift">
        <sequence resource="EMBL-CDS" id="CAA10364"/>
    </conflict>
</comment>
<proteinExistence type="evidence at protein level"/>
<keyword id="KW-1015">Disulfide bond</keyword>
<keyword id="KW-0249">Electron transport</keyword>
<keyword id="KW-0408">Iron</keyword>
<keyword id="KW-0472">Membrane</keyword>
<keyword id="KW-0479">Metal-binding</keyword>
<keyword id="KW-0496">Mitochondrion</keyword>
<keyword id="KW-0999">Mitochondrion inner membrane</keyword>
<keyword id="KW-0560">Oxidoreductase</keyword>
<keyword id="KW-1185">Reference proteome</keyword>
<keyword id="KW-0679">Respiratory chain</keyword>
<keyword id="KW-0809">Transit peptide</keyword>
<keyword id="KW-0812">Transmembrane</keyword>
<keyword id="KW-1133">Transmembrane helix</keyword>
<keyword id="KW-0813">Transport</keyword>
<protein>
    <recommendedName>
        <fullName>Ubiquinol oxidase 1a, mitochondrial</fullName>
        <ecNumber evidence="24">1.10.3.11</ecNumber>
    </recommendedName>
    <alternativeName>
        <fullName>Alternative oxidase 1a</fullName>
    </alternativeName>
</protein>
<feature type="transit peptide" description="Mitochondrion" evidence="2">
    <location>
        <begin position="1"/>
        <end position="62"/>
    </location>
</feature>
<feature type="chain" id="PRO_0000001731" description="Ubiquinol oxidase 1a, mitochondrial">
    <location>
        <begin position="63"/>
        <end position="354"/>
    </location>
</feature>
<feature type="transmembrane region" description="Helical" evidence="2">
    <location>
        <begin position="179"/>
        <end position="199"/>
    </location>
</feature>
<feature type="transmembrane region" description="Helical" evidence="2">
    <location>
        <begin position="241"/>
        <end position="261"/>
    </location>
</feature>
<feature type="region of interest" description="Disordered" evidence="3">
    <location>
        <begin position="68"/>
        <end position="99"/>
    </location>
</feature>
<feature type="compositionally biased region" description="Basic and acidic residues" evidence="3">
    <location>
        <begin position="72"/>
        <end position="86"/>
    </location>
</feature>
<feature type="binding site" evidence="1">
    <location>
        <position position="183"/>
    </location>
    <ligand>
        <name>Fe cation</name>
        <dbReference type="ChEBI" id="CHEBI:24875"/>
        <label>1</label>
    </ligand>
</feature>
<feature type="binding site" evidence="1">
    <location>
        <position position="222"/>
    </location>
    <ligand>
        <name>Fe cation</name>
        <dbReference type="ChEBI" id="CHEBI:24875"/>
        <label>1</label>
    </ligand>
</feature>
<feature type="binding site" evidence="1">
    <location>
        <position position="222"/>
    </location>
    <ligand>
        <name>Fe cation</name>
        <dbReference type="ChEBI" id="CHEBI:24875"/>
        <label>2</label>
    </ligand>
</feature>
<feature type="binding site" evidence="1">
    <location>
        <position position="225"/>
    </location>
    <ligand>
        <name>Fe cation</name>
        <dbReference type="ChEBI" id="CHEBI:24875"/>
        <label>1</label>
    </ligand>
</feature>
<feature type="binding site" evidence="1">
    <location>
        <position position="273"/>
    </location>
    <ligand>
        <name>Fe cation</name>
        <dbReference type="ChEBI" id="CHEBI:24875"/>
        <label>2</label>
    </ligand>
</feature>
<feature type="binding site" evidence="1">
    <location>
        <position position="324"/>
    </location>
    <ligand>
        <name>Fe cation</name>
        <dbReference type="ChEBI" id="CHEBI:24875"/>
        <label>1</label>
    </ligand>
</feature>
<feature type="binding site" evidence="1">
    <location>
        <position position="324"/>
    </location>
    <ligand>
        <name>Fe cation</name>
        <dbReference type="ChEBI" id="CHEBI:24875"/>
        <label>2</label>
    </ligand>
</feature>
<feature type="binding site" evidence="1">
    <location>
        <position position="327"/>
    </location>
    <ligand>
        <name>Fe cation</name>
        <dbReference type="ChEBI" id="CHEBI:24875"/>
        <label>2</label>
    </ligand>
</feature>
<feature type="disulfide bond" description="Interchain" evidence="25">
    <location>
        <position position="127"/>
    </location>
</feature>
<feature type="mutagenesis site" description="Loss of activity and stimulation by pyruvate." evidence="5 8 25">
    <original>C</original>
    <variation>A</variation>
    <variation>L</variation>
    <variation>Q</variation>
    <location>
        <position position="127"/>
    </location>
</feature>
<feature type="mutagenesis site" description="Active enzyme insensitive to stimulation by pyruvate." evidence="5 8 25">
    <original>C</original>
    <variation>E</variation>
    <variation>D</variation>
    <variation>R</variation>
    <variation>K</variation>
    <location>
        <position position="127"/>
    </location>
</feature>
<feature type="mutagenesis site" description="Loss of oxidative inactivation and stimulation by pyruvate, but can be activated by succinate." evidence="5 8 25">
    <original>C</original>
    <variation>S</variation>
    <location>
        <position position="127"/>
    </location>
</feature>
<feature type="mutagenesis site" description="No effect on stimulation by pyruvate." evidence="25">
    <original>C</original>
    <variation>A</variation>
    <location>
        <position position="177"/>
    </location>
</feature>
<feature type="mutagenesis site" description="Increased resistance to a substrate-analog inhibitor." evidence="24">
    <original>F</original>
    <variation>L</variation>
    <location>
        <position position="264"/>
    </location>
</feature>
<feature type="mutagenesis site" description="Increased resistance to a substrate-analog inhibitor." evidence="24">
    <original>M</original>
    <variation>I</variation>
    <variation>V</variation>
    <location>
        <position position="268"/>
    </location>
</feature>
<feature type="mutagenesis site" description="Increased resistance to a substrate-analog inhibitor." evidence="24">
    <original>G</original>
    <variation>E</variation>
    <location>
        <position position="352"/>
    </location>
</feature>
<feature type="sequence conflict" description="In Ref. 2; CAA10364." evidence="26" ref="2">
    <original>A</original>
    <variation>R</variation>
    <location>
        <position position="37"/>
    </location>
</feature>
<feature type="sequence conflict" description="In Ref. 6; AAA32870." evidence="26" ref="6">
    <original>IW</original>
    <variation>MD</variation>
    <location>
        <begin position="50"/>
        <end position="51"/>
    </location>
</feature>
<dbReference type="EC" id="1.10.3.11" evidence="24"/>
<dbReference type="EMBL" id="D89875">
    <property type="protein sequence ID" value="BAA22625.1"/>
    <property type="molecule type" value="Genomic_DNA"/>
</dbReference>
<dbReference type="EMBL" id="AJ131392">
    <property type="protein sequence ID" value="CAA10364.1"/>
    <property type="status" value="ALT_FRAME"/>
    <property type="molecule type" value="mRNA"/>
</dbReference>
<dbReference type="EMBL" id="AB022215">
    <property type="protein sequence ID" value="BAB01775.1"/>
    <property type="molecule type" value="Genomic_DNA"/>
</dbReference>
<dbReference type="EMBL" id="CP002686">
    <property type="protein sequence ID" value="AEE76627.1"/>
    <property type="molecule type" value="Genomic_DNA"/>
</dbReference>
<dbReference type="EMBL" id="AF370166">
    <property type="protein sequence ID" value="AAK43981.1"/>
    <property type="molecule type" value="mRNA"/>
</dbReference>
<dbReference type="EMBL" id="AY059128">
    <property type="protein sequence ID" value="AAL15234.1"/>
    <property type="molecule type" value="mRNA"/>
</dbReference>
<dbReference type="EMBL" id="M96417">
    <property type="protein sequence ID" value="AAA32870.1"/>
    <property type="molecule type" value="mRNA"/>
</dbReference>
<dbReference type="EMBL" id="U85244">
    <property type="protein sequence ID" value="AAB49302.1"/>
    <property type="molecule type" value="Genomic_DNA"/>
</dbReference>
<dbReference type="PIR" id="A46364">
    <property type="entry name" value="A46364"/>
</dbReference>
<dbReference type="PIR" id="T51615">
    <property type="entry name" value="T51615"/>
</dbReference>
<dbReference type="RefSeq" id="NP_188876.1">
    <property type="nucleotide sequence ID" value="NM_113135.4"/>
</dbReference>
<dbReference type="SMR" id="Q39219"/>
<dbReference type="BioGRID" id="7138">
    <property type="interactions" value="1"/>
</dbReference>
<dbReference type="FunCoup" id="Q39219">
    <property type="interactions" value="102"/>
</dbReference>
<dbReference type="IntAct" id="Q39219">
    <property type="interactions" value="1"/>
</dbReference>
<dbReference type="MINT" id="Q39219"/>
<dbReference type="STRING" id="3702.Q39219"/>
<dbReference type="iPTMnet" id="Q39219"/>
<dbReference type="SwissPalm" id="Q39219"/>
<dbReference type="PaxDb" id="3702-AT3G22370.1"/>
<dbReference type="ProteomicsDB" id="245006"/>
<dbReference type="EnsemblPlants" id="AT3G22370.1">
    <property type="protein sequence ID" value="AT3G22370.1"/>
    <property type="gene ID" value="AT3G22370"/>
</dbReference>
<dbReference type="GeneID" id="821806"/>
<dbReference type="Gramene" id="AT3G22370.1">
    <property type="protein sequence ID" value="AT3G22370.1"/>
    <property type="gene ID" value="AT3G22370"/>
</dbReference>
<dbReference type="KEGG" id="ath:AT3G22370"/>
<dbReference type="Araport" id="AT3G22370"/>
<dbReference type="TAIR" id="AT3G22370">
    <property type="gene designation" value="AOX1A"/>
</dbReference>
<dbReference type="eggNOG" id="ENOG502QSB5">
    <property type="taxonomic scope" value="Eukaryota"/>
</dbReference>
<dbReference type="HOGENOM" id="CLU_041974_0_1_1"/>
<dbReference type="InParanoid" id="Q39219"/>
<dbReference type="OMA" id="VAMWARP"/>
<dbReference type="PhylomeDB" id="Q39219"/>
<dbReference type="BioCyc" id="MetaCyc:AT3G22370-MONOMER"/>
<dbReference type="PRO" id="PR:Q39219"/>
<dbReference type="Proteomes" id="UP000006548">
    <property type="component" value="Chromosome 3"/>
</dbReference>
<dbReference type="ExpressionAtlas" id="Q39219">
    <property type="expression patterns" value="baseline and differential"/>
</dbReference>
<dbReference type="GO" id="GO:0009507">
    <property type="term" value="C:chloroplast"/>
    <property type="evidence" value="ECO:0000314"/>
    <property type="project" value="TAIR"/>
</dbReference>
<dbReference type="GO" id="GO:0005743">
    <property type="term" value="C:mitochondrial inner membrane"/>
    <property type="evidence" value="ECO:0007669"/>
    <property type="project" value="UniProtKB-SubCell"/>
</dbReference>
<dbReference type="GO" id="GO:0005739">
    <property type="term" value="C:mitochondrion"/>
    <property type="evidence" value="ECO:0000314"/>
    <property type="project" value="TAIR"/>
</dbReference>
<dbReference type="GO" id="GO:0009916">
    <property type="term" value="F:alternative oxidase activity"/>
    <property type="evidence" value="ECO:0000314"/>
    <property type="project" value="TAIR"/>
</dbReference>
<dbReference type="GO" id="GO:0046872">
    <property type="term" value="F:metal ion binding"/>
    <property type="evidence" value="ECO:0007669"/>
    <property type="project" value="UniProtKB-KW"/>
</dbReference>
<dbReference type="GO" id="GO:0106292">
    <property type="term" value="F:superoxide-generating NADPH oxidase activity"/>
    <property type="evidence" value="ECO:0000314"/>
    <property type="project" value="TAIR"/>
</dbReference>
<dbReference type="GO" id="GO:0102721">
    <property type="term" value="F:ubiquinol:oxygen oxidoreductase activity"/>
    <property type="evidence" value="ECO:0007669"/>
    <property type="project" value="UniProtKB-EC"/>
</dbReference>
<dbReference type="GO" id="GO:0045333">
    <property type="term" value="P:cellular respiration"/>
    <property type="evidence" value="ECO:0000314"/>
    <property type="project" value="TAIR"/>
</dbReference>
<dbReference type="GO" id="GO:0031930">
    <property type="term" value="P:mitochondria-nucleus signaling pathway"/>
    <property type="evidence" value="ECO:0000270"/>
    <property type="project" value="TAIR"/>
</dbReference>
<dbReference type="GO" id="GO:0009409">
    <property type="term" value="P:response to cold"/>
    <property type="evidence" value="ECO:0000315"/>
    <property type="project" value="TAIR"/>
</dbReference>
<dbReference type="CDD" id="cd01053">
    <property type="entry name" value="AOX"/>
    <property type="match status" value="1"/>
</dbReference>
<dbReference type="FunFam" id="1.20.1260.140:FF:000001">
    <property type="entry name" value="Ubiquinol oxidase"/>
    <property type="match status" value="1"/>
</dbReference>
<dbReference type="Gene3D" id="1.20.1260.140">
    <property type="entry name" value="Alternative oxidase"/>
    <property type="match status" value="1"/>
</dbReference>
<dbReference type="InterPro" id="IPR002680">
    <property type="entry name" value="AOX"/>
</dbReference>
<dbReference type="InterPro" id="IPR038659">
    <property type="entry name" value="AOX_sf"/>
</dbReference>
<dbReference type="PANTHER" id="PTHR31803">
    <property type="entry name" value="ALTERNATIVE OXIDASE"/>
    <property type="match status" value="1"/>
</dbReference>
<dbReference type="PANTHER" id="PTHR31803:SF3">
    <property type="entry name" value="ALTERNATIVE OXIDASE"/>
    <property type="match status" value="1"/>
</dbReference>
<dbReference type="Pfam" id="PF01786">
    <property type="entry name" value="AOX"/>
    <property type="match status" value="1"/>
</dbReference>
<dbReference type="PIRSF" id="PIRSF005229">
    <property type="entry name" value="AOX"/>
    <property type="match status" value="1"/>
</dbReference>
<evidence type="ECO:0000250" key="1">
    <source>
        <dbReference type="UniProtKB" id="Q26710"/>
    </source>
</evidence>
<evidence type="ECO:0000255" key="2"/>
<evidence type="ECO:0000256" key="3">
    <source>
        <dbReference type="SAM" id="MobiDB-lite"/>
    </source>
</evidence>
<evidence type="ECO:0000269" key="4">
    <source>
    </source>
</evidence>
<evidence type="ECO:0000269" key="5">
    <source>
    </source>
</evidence>
<evidence type="ECO:0000269" key="6">
    <source>
    </source>
</evidence>
<evidence type="ECO:0000269" key="7">
    <source>
    </source>
</evidence>
<evidence type="ECO:0000269" key="8">
    <source>
    </source>
</evidence>
<evidence type="ECO:0000269" key="9">
    <source>
    </source>
</evidence>
<evidence type="ECO:0000269" key="10">
    <source>
    </source>
</evidence>
<evidence type="ECO:0000269" key="11">
    <source>
    </source>
</evidence>
<evidence type="ECO:0000269" key="12">
    <source>
    </source>
</evidence>
<evidence type="ECO:0000269" key="13">
    <source>
    </source>
</evidence>
<evidence type="ECO:0000269" key="14">
    <source>
    </source>
</evidence>
<evidence type="ECO:0000269" key="15">
    <source>
    </source>
</evidence>
<evidence type="ECO:0000269" key="16">
    <source>
    </source>
</evidence>
<evidence type="ECO:0000269" key="17">
    <source>
    </source>
</evidence>
<evidence type="ECO:0000269" key="18">
    <source>
    </source>
</evidence>
<evidence type="ECO:0000269" key="19">
    <source>
    </source>
</evidence>
<evidence type="ECO:0000269" key="20">
    <source>
    </source>
</evidence>
<evidence type="ECO:0000269" key="21">
    <source>
    </source>
</evidence>
<evidence type="ECO:0000269" key="22">
    <source>
    </source>
</evidence>
<evidence type="ECO:0000269" key="23">
    <source>
    </source>
</evidence>
<evidence type="ECO:0000269" key="24">
    <source>
    </source>
</evidence>
<evidence type="ECO:0000269" key="25">
    <source>
    </source>
</evidence>
<evidence type="ECO:0000305" key="26"/>
<evidence type="ECO:0000305" key="27">
    <source>
    </source>
</evidence>
<evidence type="ECO:0000305" key="28">
    <source>
    </source>
</evidence>
<evidence type="ECO:0000305" key="29">
    <source>
    </source>
</evidence>
<accession>Q39219</accession>
<accession>O23914</accession>
<accession>P93734</accession>
<accession>Q9ZRT8</accession>
<sequence length="354" mass="39980">MMITRGGAKAAKSLLVAAGPRLFSTVRTVSSHEALSASHILKPGVTSAWIWTRAPTIGGMRFASTITLGEKTPMKEEDANQKKTENESTGGDAAGGNNKGDKGIASYWGVEPNKITKEDGSEWKWNCFRPWETYKADITIDLKKHHVPTTFLDRIAYWTVKSLRWPTDLFFQRRYGCRAMMLETVAAVPGMVGGMLLHCKSLRRFEQSGGWIKALLEEAENERMHLMTFMEVAKPKWYERALVITVQGVFFNAYFLGYLISPKFAHRMVGYLEEEAIHSYTEFLKELDKGNIENVPAPAIAIDYWRLPADATLRDVVMVVRADEAHHRDVNHFASDIHYQGRELKEAPAPIGYH</sequence>
<organism>
    <name type="scientific">Arabidopsis thaliana</name>
    <name type="common">Mouse-ear cress</name>
    <dbReference type="NCBI Taxonomy" id="3702"/>
    <lineage>
        <taxon>Eukaryota</taxon>
        <taxon>Viridiplantae</taxon>
        <taxon>Streptophyta</taxon>
        <taxon>Embryophyta</taxon>
        <taxon>Tracheophyta</taxon>
        <taxon>Spermatophyta</taxon>
        <taxon>Magnoliopsida</taxon>
        <taxon>eudicotyledons</taxon>
        <taxon>Gunneridae</taxon>
        <taxon>Pentapetalae</taxon>
        <taxon>rosids</taxon>
        <taxon>malvids</taxon>
        <taxon>Brassicales</taxon>
        <taxon>Brassicaceae</taxon>
        <taxon>Camelineae</taxon>
        <taxon>Arabidopsis</taxon>
    </lineage>
</organism>
<reference key="1">
    <citation type="journal article" date="1997" name="Plant Mol. Biol.">
        <title>Characterization of the gene family for alternative oxidase from Arabidopsis thaliana.</title>
        <authorList>
            <person name="Saisho D."/>
            <person name="Nambara E."/>
            <person name="Naito S."/>
            <person name="Tsutsumi N."/>
            <person name="Hirai A."/>
            <person name="Nakazono M."/>
        </authorList>
    </citation>
    <scope>NUCLEOTIDE SEQUENCE [GENOMIC DNA]</scope>
    <scope>INDUCTION BY ANTIMYCIN A</scope>
    <scope>TISSUE SPECIFICITY</scope>
    <source>
        <strain>cv. Columbia</strain>
        <tissue>Leaf</tissue>
        <tissue>Stem</tissue>
    </source>
</reference>
<reference key="2">
    <citation type="journal article" date="1999" name="FEBS Lett.">
        <title>Identification of new early markers of the hypersensitive response in Arabidopsis thaliana.</title>
        <authorList>
            <person name="Lacomme C.J."/>
            <person name="Roby D."/>
        </authorList>
    </citation>
    <scope>NUCLEOTIDE SEQUENCE [MRNA]</scope>
</reference>
<reference key="3">
    <citation type="journal article" date="2000" name="DNA Res.">
        <title>Structural analysis of Arabidopsis thaliana chromosome 3. I. Sequence features of the regions of 4,504,864 bp covered by sixty P1 and TAC clones.</title>
        <authorList>
            <person name="Sato S."/>
            <person name="Nakamura Y."/>
            <person name="Kaneko T."/>
            <person name="Katoh T."/>
            <person name="Asamizu E."/>
            <person name="Tabata S."/>
        </authorList>
    </citation>
    <scope>NUCLEOTIDE SEQUENCE [LARGE SCALE GENOMIC DNA]</scope>
    <source>
        <strain>cv. Columbia</strain>
    </source>
</reference>
<reference key="4">
    <citation type="journal article" date="2017" name="Plant J.">
        <title>Araport11: a complete reannotation of the Arabidopsis thaliana reference genome.</title>
        <authorList>
            <person name="Cheng C.Y."/>
            <person name="Krishnakumar V."/>
            <person name="Chan A.P."/>
            <person name="Thibaud-Nissen F."/>
            <person name="Schobel S."/>
            <person name="Town C.D."/>
        </authorList>
    </citation>
    <scope>GENOME REANNOTATION</scope>
    <source>
        <strain>cv. Columbia</strain>
    </source>
</reference>
<reference key="5">
    <citation type="journal article" date="2003" name="Science">
        <title>Empirical analysis of transcriptional activity in the Arabidopsis genome.</title>
        <authorList>
            <person name="Yamada K."/>
            <person name="Lim J."/>
            <person name="Dale J.M."/>
            <person name="Chen H."/>
            <person name="Shinn P."/>
            <person name="Palm C.J."/>
            <person name="Southwick A.M."/>
            <person name="Wu H.C."/>
            <person name="Kim C.J."/>
            <person name="Nguyen M."/>
            <person name="Pham P.K."/>
            <person name="Cheuk R.F."/>
            <person name="Karlin-Newmann G."/>
            <person name="Liu S.X."/>
            <person name="Lam B."/>
            <person name="Sakano H."/>
            <person name="Wu T."/>
            <person name="Yu G."/>
            <person name="Miranda M."/>
            <person name="Quach H.L."/>
            <person name="Tripp M."/>
            <person name="Chang C.H."/>
            <person name="Lee J.M."/>
            <person name="Toriumi M.J."/>
            <person name="Chan M.M."/>
            <person name="Tang C.C."/>
            <person name="Onodera C.S."/>
            <person name="Deng J.M."/>
            <person name="Akiyama K."/>
            <person name="Ansari Y."/>
            <person name="Arakawa T."/>
            <person name="Banh J."/>
            <person name="Banno F."/>
            <person name="Bowser L."/>
            <person name="Brooks S.Y."/>
            <person name="Carninci P."/>
            <person name="Chao Q."/>
            <person name="Choy N."/>
            <person name="Enju A."/>
            <person name="Goldsmith A.D."/>
            <person name="Gurjal M."/>
            <person name="Hansen N.F."/>
            <person name="Hayashizaki Y."/>
            <person name="Johnson-Hopson C."/>
            <person name="Hsuan V.W."/>
            <person name="Iida K."/>
            <person name="Karnes M."/>
            <person name="Khan S."/>
            <person name="Koesema E."/>
            <person name="Ishida J."/>
            <person name="Jiang P.X."/>
            <person name="Jones T."/>
            <person name="Kawai J."/>
            <person name="Kamiya A."/>
            <person name="Meyers C."/>
            <person name="Nakajima M."/>
            <person name="Narusaka M."/>
            <person name="Seki M."/>
            <person name="Sakurai T."/>
            <person name="Satou M."/>
            <person name="Tamse R."/>
            <person name="Vaysberg M."/>
            <person name="Wallender E.K."/>
            <person name="Wong C."/>
            <person name="Yamamura Y."/>
            <person name="Yuan S."/>
            <person name="Shinozaki K."/>
            <person name="Davis R.W."/>
            <person name="Theologis A."/>
            <person name="Ecker J.R."/>
        </authorList>
    </citation>
    <scope>NUCLEOTIDE SEQUENCE [LARGE SCALE MRNA]</scope>
    <source>
        <strain>cv. Columbia</strain>
    </source>
</reference>
<reference key="6">
    <citation type="journal article" date="1992" name="Proc. Natl. Acad. Sci. U.S.A.">
        <title>Arabidopsis alternative oxidase sustains Escherichia coli respiration.</title>
        <authorList>
            <person name="Kumar A.M."/>
            <person name="Soell D."/>
        </authorList>
    </citation>
    <scope>NUCLEOTIDE SEQUENCE [MRNA] OF 50-354</scope>
    <scope>FUNCTION</scope>
</reference>
<reference key="7">
    <citation type="submission" date="1997-03" db="EMBL/GenBank/DDBJ databases">
        <authorList>
            <person name="Johnson Potter F."/>
            <person name="Wiskich J.T."/>
        </authorList>
    </citation>
    <scope>NUCLEOTIDE SEQUENCE [GENOMIC DNA] OF 68-354</scope>
</reference>
<reference key="8">
    <citation type="journal article" date="1995" name="FEBS Lett.">
        <title>The active site of the cyanide-resistant oxidase from plant mitochondria contains a binuclear iron center.</title>
        <authorList>
            <person name="Siedow J.N."/>
            <person name="Umbach A.L."/>
            <person name="Moore A.L."/>
        </authorList>
    </citation>
    <scope>IRON-BINDING SITES</scope>
    <scope>COFACTOR</scope>
</reference>
<reference key="9">
    <citation type="journal article" date="1998" name="Biochim. Biophys. Acta">
        <title>Isolation of mutants of the Arabidopsis thaliana alternative oxidase (ubiquinol:oxygen oxidoreductase) resistant to salicylhydroxamic acid.</title>
        <authorList>
            <person name="Berthold D.A."/>
        </authorList>
    </citation>
    <scope>FUNCTION</scope>
    <scope>CATALYTIC ACTIVITY</scope>
    <scope>MUTAGENESIS OF PHE-264; MET-268 AND GLY-352</scope>
</reference>
<reference key="10">
    <citation type="journal article" date="1998" name="J. Biol. Chem.">
        <title>Regulation of the cyanide-resistant alternative oxidase of plant mitochondria. Identification of the cysteine residue involved in alpha-keto acid stimulation and intersubunit disulfide bond formation.</title>
        <authorList>
            <person name="Rhoads D.M."/>
            <person name="Umbach A.L."/>
            <person name="Sweet C.R."/>
            <person name="Lennon A.M."/>
            <person name="Rauch G.S."/>
            <person name="Siedow J.N."/>
        </authorList>
    </citation>
    <scope>MUTAGENESIS OF CYS-127 AND CYS-177</scope>
    <scope>SUBUNIT</scope>
    <scope>DISULFIDE BOND</scope>
    <scope>ACTIVITY REGULATION</scope>
</reference>
<reference key="11">
    <citation type="journal article" date="1999" name="FEBS Lett.">
        <title>A revised model of the active site of alternative oxidase.</title>
        <authorList>
            <person name="Andersson M.E."/>
            <person name="Nordlund P."/>
        </authorList>
    </citation>
    <scope>IRON-BINDING SITES</scope>
    <scope>COFACTOR</scope>
</reference>
<reference key="12">
    <citation type="journal article" date="1999" name="FEBS Lett.">
        <title>A single amino acid change in the plant alternative oxidase alters the specificity of organic acid activation.</title>
        <authorList>
            <person name="Djajanegara I."/>
            <person name="Holtzapffel R."/>
            <person name="Finnegan P.M."/>
            <person name="Hoefnagel M.H."/>
            <person name="Berthold D.A."/>
            <person name="Wiskich J.T."/>
            <person name="Day D.A."/>
        </authorList>
    </citation>
    <scope>MUTAGENESIS OF CYS-127</scope>
    <scope>ACTIVITY REGULATION</scope>
</reference>
<reference key="13">
    <citation type="journal article" date="2000" name="Biochim. Biophys. Acta">
        <title>New insight into the structure and function of the alternative oxidase.</title>
        <authorList>
            <person name="Berthold D.A."/>
            <person name="Andersson M.E."/>
            <person name="Nordlund P."/>
        </authorList>
    </citation>
    <scope>IRON-BINDING SITES</scope>
    <scope>COFACTOR</scope>
</reference>
<reference key="14">
    <citation type="journal article" date="2001" name="Genes Genet. Syst.">
        <title>The gene for alternative oxidase-2 (AOX2) from Arabidopsis thaliana consists of five exons unlike other AOX genes and is transcribed at an early stage during germination.</title>
        <authorList>
            <person name="Saisho D."/>
            <person name="Nakazono M."/>
            <person name="Lee K.-H."/>
            <person name="Tsutsumi N."/>
            <person name="Akita S."/>
            <person name="Hirai A."/>
        </authorList>
    </citation>
    <scope>DEVELOPMENTAL STAGE</scope>
    <scope>INDUCTION BY ANTIMYCIN A</scope>
    <source>
        <strain>cv. Columbia GL1</strain>
    </source>
</reference>
<reference key="15">
    <citation type="journal article" date="2002" name="Biochim. Biophys. Acta">
        <title>Activation of the plant mitochondrial alternative oxidase: insights from site-directed mutagenesis.</title>
        <authorList>
            <person name="Umbach A.L."/>
            <person name="Gonzalez-Meler M.A."/>
            <person name="Sweet C.R."/>
            <person name="Siedow J.N."/>
        </authorList>
    </citation>
    <scope>MUTAGENESIS OF CYS-127</scope>
    <scope>INDUCTION BY GLYOXLATE</scope>
</reference>
<reference key="16">
    <citation type="journal article" date="2002" name="J. Biol. Chem.">
        <title>EPR studies of the mitochondrial alternative oxidase. Evidence for a diiron carboxylate center.</title>
        <authorList>
            <person name="Berthold D.A."/>
            <person name="Voevodskaya N."/>
            <person name="Stenmark P."/>
            <person name="Graslund A."/>
            <person name="Nordlund P."/>
        </authorList>
    </citation>
    <scope>EPR SPECTROSCOPY</scope>
</reference>
<reference key="17">
    <citation type="journal article" date="2004" name="Plant Cell">
        <title>Experimental analysis of the Arabidopsis mitochondrial proteome highlights signaling and regulatory components, provides assessment of targeting prediction programs, and indicates plant-specific mitochondrial proteins.</title>
        <authorList>
            <person name="Heazlewood J.L."/>
            <person name="Tonti-Filippini J.S."/>
            <person name="Gout A.M."/>
            <person name="Day D.A."/>
            <person name="Whelan J."/>
            <person name="Millar A.H."/>
        </authorList>
    </citation>
    <scope>IDENTIFICATION BY MASS SPECTROMETRY</scope>
    <scope>SUBCELLULAR LOCATION [LARGE SCALE ANALYSIS]</scope>
    <source>
        <strain>cv. Landsberg erecta</strain>
    </source>
</reference>
<reference key="18">
    <citation type="journal article" date="2005" name="Plant Mol. Biol.">
        <title>Stress-induced co-expression of alternative respiratory chain components in Arabidopsis thaliana.</title>
        <authorList>
            <person name="Clifton R."/>
            <person name="Lister R."/>
            <person name="Parker K.L."/>
            <person name="Sappl P.G."/>
            <person name="Elhafez D."/>
            <person name="Millar A.H."/>
            <person name="Day D.A."/>
            <person name="Whelan J."/>
        </authorList>
    </citation>
    <scope>INDUCTION BY ABIOTIC STRESSES</scope>
</reference>
<reference key="19">
    <citation type="journal article" date="2005" name="Plant Physiol.">
        <title>The alternative oxidase of plant mitochondria is involved in the acclimation of shoot growth at low temperature. A study of Arabidopsis AOX1a transgenic plants.</title>
        <authorList>
            <person name="Fiorani F."/>
            <person name="Umbach A.L."/>
            <person name="Siedow J.N."/>
        </authorList>
    </citation>
    <scope>FUNCTION</scope>
</reference>
<reference key="20">
    <citation type="journal article" date="2006" name="Biochim. Biophys. Acta">
        <title>Alternative oxidases in Arabidopsis: a comparative analysis of differential expression in the gene family provides new insights into function of non-phosphorylating bypasses.</title>
        <authorList>
            <person name="Clifton R."/>
            <person name="Millar A.H."/>
            <person name="Whelan J."/>
        </authorList>
    </citation>
    <scope>DEVELOPMENTAL STAGE</scope>
    <scope>TISSUE SPECIFICITY</scope>
</reference>
<reference key="21">
    <citation type="journal article" date="2006" name="Plant Cell Physiol.">
        <title>Characterization of mitochondrial alternative NAD(P)H dehydrogenases in Arabidopsis: intraorganelle location and expression.</title>
        <authorList>
            <person name="Elhafez D."/>
            <person name="Murcha M.W."/>
            <person name="Clifton R."/>
            <person name="Soole K.L."/>
            <person name="Day D.A."/>
            <person name="Whelan J."/>
        </authorList>
    </citation>
    <scope>TISSUE SPECIFICITY</scope>
    <scope>INDUCTION</scope>
</reference>
<reference key="22">
    <citation type="journal article" date="2007" name="Plant Cell Physiol.">
        <title>Alternative oxidase involvement in cold stress response of Arabidopsis thaliana fad2 and FAD3+ cell suspensions altered in membrane lipid composition.</title>
        <authorList>
            <person name="Matos A.R."/>
            <person name="Hourton-Cabassa C."/>
            <person name="Cicek D."/>
            <person name="Reze N."/>
            <person name="Arrabaca J.D."/>
            <person name="Zachowski A."/>
            <person name="Moreau F."/>
        </authorList>
    </citation>
    <scope>INDUCTION BY COLD</scope>
</reference>
<reference key="23">
    <citation type="journal article" date="2009" name="Mol. Plant">
        <title>Induction of the AOX1D isoform of alternative oxidase in A. thaliana T-DNA insertion lines lacking isoform AOX1A is insufficient to optimize photosynthesis when treated with antimycin A.</title>
        <authorList>
            <person name="Strodtkoetter I."/>
            <person name="Padmasree K."/>
            <person name="Dinakar C."/>
            <person name="Speth B."/>
            <person name="Niazi P.S."/>
            <person name="Wojtera J."/>
            <person name="Voss I."/>
            <person name="Do P.T."/>
            <person name="Nunes-Nesi A."/>
            <person name="Fernie A.R."/>
            <person name="Linke V."/>
            <person name="Raghavendra A.S."/>
            <person name="Scheibe R."/>
        </authorList>
    </citation>
    <scope>DISRUPTION PHENOTYPE</scope>
</reference>
<reference key="24">
    <citation type="journal article" date="2009" name="Plant Cell Physiol.">
        <title>Differential gene expression profiles of the mitochondrial respiratory components in illuminated Arabidopsis leaves.</title>
        <authorList>
            <person name="Yoshida K."/>
            <person name="Noguchi K."/>
        </authorList>
    </citation>
    <scope>INDUCTION BY HIGH LIGHT</scope>
</reference>
<reference key="25">
    <citation type="journal article" date="2010" name="Plant Cell Physiol.">
        <title>Effects of AOX1a deficiency on plant growth, gene expression of respiratory components and metabolic profile under low-nitrogen stress in Arabidopsis thaliana.</title>
        <authorList>
            <person name="Watanabe C.K."/>
            <person name="Hachiya T."/>
            <person name="Takahara K."/>
            <person name="Kawai-Yamada M."/>
            <person name="Uchimiya H."/>
            <person name="Uesono Y."/>
            <person name="Terashima I."/>
            <person name="Noguchi K."/>
        </authorList>
    </citation>
    <scope>INDUCTION BY LOW-NITROGEN STRESS</scope>
    <scope>DISRUPTION PHENOTYPE</scope>
</reference>
<reference key="26">
    <citation type="journal article" date="2010" name="Plant Cell Physiol.">
        <title>Involvement of ethylene and hydrogen peroxide in induction of alternative respiratory pathway in salt-treated Arabidopsis calluses.</title>
        <authorList>
            <person name="Wang H."/>
            <person name="Liang X."/>
            <person name="Huang J."/>
            <person name="Zhang D."/>
            <person name="Lu H."/>
            <person name="Liu Z."/>
            <person name="Bi Y."/>
        </authorList>
    </citation>
    <scope>INDUCTION BY SALT STRESS; H(2)O(2) AND ETHYLENE</scope>
</reference>
<reference key="27">
    <citation type="journal article" date="2011" name="Plant Cell Environ.">
        <title>Physiological impact of mitochondrial alternative oxidase on photosynthesis and growth in Arabidopsis thaliana.</title>
        <authorList>
            <person name="Yoshida K."/>
            <person name="Watanabe C.K."/>
            <person name="Terashima I."/>
            <person name="Noguchi K."/>
        </authorList>
    </citation>
    <scope>DISRUPTION PHENOTYPE</scope>
</reference>
<reference key="28">
    <citation type="journal article" date="2012" name="Planta">
        <title>Involvement of hydrogen peroxide, calcium, and ethylene in the induction of the alternative pathway in chilling-stressed Arabidopsis callus.</title>
        <authorList>
            <person name="Wang H."/>
            <person name="Huang J."/>
            <person name="Liang X."/>
            <person name="Bi Y."/>
        </authorList>
    </citation>
    <scope>INDUCTION BY COLD AND ETHYLENE</scope>
</reference>
<reference key="29">
    <citation type="journal article" date="2012" name="Plant Cell Physiol.">
        <title>The absence of alternative oxidase AOX1A results in altered response of photosynthetic carbon assimilation to increasing CO2 in Arabidopsis thaliana.</title>
        <authorList>
            <person name="Gandin A."/>
            <person name="Duffes C."/>
            <person name="Day D.A."/>
            <person name="Cousins A.B."/>
        </authorList>
    </citation>
    <scope>DISRUPTION PHENOTYPE</scope>
</reference>
<gene>
    <name type="primary">AOX1A</name>
    <name type="synonym">AOX1</name>
    <name type="synonym">HSR3</name>
    <name type="ordered locus">At3g22370</name>
    <name type="ORF">MCB17.11</name>
</gene>